<sequence>MKETLQAMIRAAATAAFEKGALTASRFPDIELEAPRFRDHGDFATNLAMVSASTQKMAPRKIAEAIVAHLADSAGILLKTEIAGPGFINFFICPEAWLPVLHRIHEDQERFGACDLGGGKRVQVEFVSANPTGPLHVGHGRGAAVGDSVARILAFCGWQVHREYYVNDAGNQILTLGRSVLLRWRELSGQAVDFPEDCYQGDYIRSIARQIDAEHRQALEKMESAEAVAFCARVAADQILDGIRRDLADFSITFDQWFSEKSLVETGAVETTLARLKETGVVYESEGALWFATSRFGDEKDRVVVRNNGEATYFASDIAYHKNKFDRGFNRVIDVWGADHHGYIPRVKAAIGAVGRSQDDLDVILVQLVALLREGQPVSMSTRSGEFVTLKEVTNEVGADAARFIFLSRHYDSPLDFDLELAKKKSNDNPVYYVQYVHARIASMLKKAAEEKGIGRVTAVDDKTLRRLAEPEEIDLVKLLARYPEAVSHAARFLEPHRITFYLLDLAAGFHGYYSRHKVLTEDDGLTMARLYLVCAVKQVIKNGLALLGVSAPESM</sequence>
<name>SYR_DESOH</name>
<dbReference type="EC" id="6.1.1.19" evidence="1"/>
<dbReference type="EMBL" id="CP000859">
    <property type="protein sequence ID" value="ABW69018.1"/>
    <property type="molecule type" value="Genomic_DNA"/>
</dbReference>
<dbReference type="RefSeq" id="WP_012176628.1">
    <property type="nucleotide sequence ID" value="NC_009943.1"/>
</dbReference>
<dbReference type="SMR" id="A9A099"/>
<dbReference type="STRING" id="96561.Dole_3215"/>
<dbReference type="KEGG" id="dol:Dole_3215"/>
<dbReference type="eggNOG" id="COG0018">
    <property type="taxonomic scope" value="Bacteria"/>
</dbReference>
<dbReference type="HOGENOM" id="CLU_006406_0_1_7"/>
<dbReference type="OrthoDB" id="9803211at2"/>
<dbReference type="Proteomes" id="UP000008561">
    <property type="component" value="Chromosome"/>
</dbReference>
<dbReference type="GO" id="GO:0005737">
    <property type="term" value="C:cytoplasm"/>
    <property type="evidence" value="ECO:0007669"/>
    <property type="project" value="UniProtKB-SubCell"/>
</dbReference>
<dbReference type="GO" id="GO:0004814">
    <property type="term" value="F:arginine-tRNA ligase activity"/>
    <property type="evidence" value="ECO:0007669"/>
    <property type="project" value="UniProtKB-UniRule"/>
</dbReference>
<dbReference type="GO" id="GO:0005524">
    <property type="term" value="F:ATP binding"/>
    <property type="evidence" value="ECO:0007669"/>
    <property type="project" value="UniProtKB-UniRule"/>
</dbReference>
<dbReference type="GO" id="GO:0006420">
    <property type="term" value="P:arginyl-tRNA aminoacylation"/>
    <property type="evidence" value="ECO:0007669"/>
    <property type="project" value="UniProtKB-UniRule"/>
</dbReference>
<dbReference type="CDD" id="cd07956">
    <property type="entry name" value="Anticodon_Ia_Arg"/>
    <property type="match status" value="1"/>
</dbReference>
<dbReference type="CDD" id="cd00671">
    <property type="entry name" value="ArgRS_core"/>
    <property type="match status" value="1"/>
</dbReference>
<dbReference type="FunFam" id="1.10.730.10:FF:000008">
    <property type="entry name" value="Arginine--tRNA ligase"/>
    <property type="match status" value="1"/>
</dbReference>
<dbReference type="FunFam" id="3.40.50.620:FF:000062">
    <property type="entry name" value="Arginine--tRNA ligase"/>
    <property type="match status" value="1"/>
</dbReference>
<dbReference type="Gene3D" id="3.30.1360.70">
    <property type="entry name" value="Arginyl tRNA synthetase N-terminal domain"/>
    <property type="match status" value="1"/>
</dbReference>
<dbReference type="Gene3D" id="3.40.50.620">
    <property type="entry name" value="HUPs"/>
    <property type="match status" value="1"/>
</dbReference>
<dbReference type="Gene3D" id="1.10.730.10">
    <property type="entry name" value="Isoleucyl-tRNA Synthetase, Domain 1"/>
    <property type="match status" value="1"/>
</dbReference>
<dbReference type="HAMAP" id="MF_00123">
    <property type="entry name" value="Arg_tRNA_synth"/>
    <property type="match status" value="1"/>
</dbReference>
<dbReference type="InterPro" id="IPR001412">
    <property type="entry name" value="aa-tRNA-synth_I_CS"/>
</dbReference>
<dbReference type="InterPro" id="IPR001278">
    <property type="entry name" value="Arg-tRNA-ligase"/>
</dbReference>
<dbReference type="InterPro" id="IPR005148">
    <property type="entry name" value="Arg-tRNA-synth_N"/>
</dbReference>
<dbReference type="InterPro" id="IPR036695">
    <property type="entry name" value="Arg-tRNA-synth_N_sf"/>
</dbReference>
<dbReference type="InterPro" id="IPR035684">
    <property type="entry name" value="ArgRS_core"/>
</dbReference>
<dbReference type="InterPro" id="IPR008909">
    <property type="entry name" value="DALR_anticod-bd"/>
</dbReference>
<dbReference type="InterPro" id="IPR014729">
    <property type="entry name" value="Rossmann-like_a/b/a_fold"/>
</dbReference>
<dbReference type="InterPro" id="IPR009080">
    <property type="entry name" value="tRNAsynth_Ia_anticodon-bd"/>
</dbReference>
<dbReference type="NCBIfam" id="TIGR00456">
    <property type="entry name" value="argS"/>
    <property type="match status" value="1"/>
</dbReference>
<dbReference type="PANTHER" id="PTHR11956:SF5">
    <property type="entry name" value="ARGININE--TRNA LIGASE, CYTOPLASMIC"/>
    <property type="match status" value="1"/>
</dbReference>
<dbReference type="PANTHER" id="PTHR11956">
    <property type="entry name" value="ARGINYL-TRNA SYNTHETASE"/>
    <property type="match status" value="1"/>
</dbReference>
<dbReference type="Pfam" id="PF03485">
    <property type="entry name" value="Arg_tRNA_synt_N"/>
    <property type="match status" value="1"/>
</dbReference>
<dbReference type="Pfam" id="PF05746">
    <property type="entry name" value="DALR_1"/>
    <property type="match status" value="1"/>
</dbReference>
<dbReference type="Pfam" id="PF00750">
    <property type="entry name" value="tRNA-synt_1d"/>
    <property type="match status" value="1"/>
</dbReference>
<dbReference type="PRINTS" id="PR01038">
    <property type="entry name" value="TRNASYNTHARG"/>
</dbReference>
<dbReference type="SMART" id="SM01016">
    <property type="entry name" value="Arg_tRNA_synt_N"/>
    <property type="match status" value="1"/>
</dbReference>
<dbReference type="SMART" id="SM00836">
    <property type="entry name" value="DALR_1"/>
    <property type="match status" value="1"/>
</dbReference>
<dbReference type="SUPFAM" id="SSF47323">
    <property type="entry name" value="Anticodon-binding domain of a subclass of class I aminoacyl-tRNA synthetases"/>
    <property type="match status" value="1"/>
</dbReference>
<dbReference type="SUPFAM" id="SSF55190">
    <property type="entry name" value="Arginyl-tRNA synthetase (ArgRS), N-terminal 'additional' domain"/>
    <property type="match status" value="1"/>
</dbReference>
<dbReference type="SUPFAM" id="SSF52374">
    <property type="entry name" value="Nucleotidylyl transferase"/>
    <property type="match status" value="1"/>
</dbReference>
<dbReference type="PROSITE" id="PS00178">
    <property type="entry name" value="AA_TRNA_LIGASE_I"/>
    <property type="match status" value="1"/>
</dbReference>
<evidence type="ECO:0000255" key="1">
    <source>
        <dbReference type="HAMAP-Rule" id="MF_00123"/>
    </source>
</evidence>
<proteinExistence type="inferred from homology"/>
<reference key="1">
    <citation type="submission" date="2007-10" db="EMBL/GenBank/DDBJ databases">
        <title>Complete sequence of Desulfococcus oleovorans Hxd3.</title>
        <authorList>
            <consortium name="US DOE Joint Genome Institute"/>
            <person name="Copeland A."/>
            <person name="Lucas S."/>
            <person name="Lapidus A."/>
            <person name="Barry K."/>
            <person name="Glavina del Rio T."/>
            <person name="Dalin E."/>
            <person name="Tice H."/>
            <person name="Pitluck S."/>
            <person name="Kiss H."/>
            <person name="Brettin T."/>
            <person name="Bruce D."/>
            <person name="Detter J.C."/>
            <person name="Han C."/>
            <person name="Schmutz J."/>
            <person name="Larimer F."/>
            <person name="Land M."/>
            <person name="Hauser L."/>
            <person name="Kyrpides N."/>
            <person name="Kim E."/>
            <person name="Wawrik B."/>
            <person name="Richardson P."/>
        </authorList>
    </citation>
    <scope>NUCLEOTIDE SEQUENCE [LARGE SCALE GENOMIC DNA]</scope>
    <source>
        <strain>DSM 6200 / JCM 39069 / Hxd3</strain>
    </source>
</reference>
<protein>
    <recommendedName>
        <fullName evidence="1">Arginine--tRNA ligase</fullName>
        <ecNumber evidence="1">6.1.1.19</ecNumber>
    </recommendedName>
    <alternativeName>
        <fullName evidence="1">Arginyl-tRNA synthetase</fullName>
        <shortName evidence="1">ArgRS</shortName>
    </alternativeName>
</protein>
<comment type="catalytic activity">
    <reaction evidence="1">
        <text>tRNA(Arg) + L-arginine + ATP = L-arginyl-tRNA(Arg) + AMP + diphosphate</text>
        <dbReference type="Rhea" id="RHEA:20301"/>
        <dbReference type="Rhea" id="RHEA-COMP:9658"/>
        <dbReference type="Rhea" id="RHEA-COMP:9673"/>
        <dbReference type="ChEBI" id="CHEBI:30616"/>
        <dbReference type="ChEBI" id="CHEBI:32682"/>
        <dbReference type="ChEBI" id="CHEBI:33019"/>
        <dbReference type="ChEBI" id="CHEBI:78442"/>
        <dbReference type="ChEBI" id="CHEBI:78513"/>
        <dbReference type="ChEBI" id="CHEBI:456215"/>
        <dbReference type="EC" id="6.1.1.19"/>
    </reaction>
</comment>
<comment type="subunit">
    <text evidence="1">Monomer.</text>
</comment>
<comment type="subcellular location">
    <subcellularLocation>
        <location evidence="1">Cytoplasm</location>
    </subcellularLocation>
</comment>
<comment type="similarity">
    <text evidence="1">Belongs to the class-I aminoacyl-tRNA synthetase family.</text>
</comment>
<keyword id="KW-0030">Aminoacyl-tRNA synthetase</keyword>
<keyword id="KW-0067">ATP-binding</keyword>
<keyword id="KW-0963">Cytoplasm</keyword>
<keyword id="KW-0436">Ligase</keyword>
<keyword id="KW-0547">Nucleotide-binding</keyword>
<keyword id="KW-0648">Protein biosynthesis</keyword>
<keyword id="KW-1185">Reference proteome</keyword>
<organism>
    <name type="scientific">Desulfosudis oleivorans (strain DSM 6200 / JCM 39069 / Hxd3)</name>
    <name type="common">Desulfococcus oleovorans</name>
    <dbReference type="NCBI Taxonomy" id="96561"/>
    <lineage>
        <taxon>Bacteria</taxon>
        <taxon>Pseudomonadati</taxon>
        <taxon>Thermodesulfobacteriota</taxon>
        <taxon>Desulfobacteria</taxon>
        <taxon>Desulfobacterales</taxon>
        <taxon>Desulfosudaceae</taxon>
        <taxon>Desulfosudis</taxon>
    </lineage>
</organism>
<gene>
    <name evidence="1" type="primary">argS</name>
    <name type="ordered locus">Dole_3215</name>
</gene>
<accession>A9A099</accession>
<feature type="chain" id="PRO_1000198896" description="Arginine--tRNA ligase">
    <location>
        <begin position="1"/>
        <end position="556"/>
    </location>
</feature>
<feature type="short sequence motif" description="'HIGH' region">
    <location>
        <begin position="129"/>
        <end position="139"/>
    </location>
</feature>